<sequence>MIDTVYGFGQGLMGGIWPATVWPVLWALIKIVCVLLPLMGCVAYLTLWERKAIGFTQIRFGPNRVGPFGLLQPIADALKLLTKEIIMPTAASKGLFVLGPIMTIMPALAAWAVIPFGPDIALSNINAGLLFLMAITSMEVYGVIIAGWASNSKYAFLGAMRASAQMVSYEIAMGFCLVVVLMVSASLNMTDIVMSQAKGIAVGYGLNFLSWNWLPLLPIFVVYFISGLAETNRHPFDVVEGESEIVAGHMVEYSGMAFAMFFLAEYANMWLVAILAVILFLGGWLSPVDWWLFNLIPGWIWLGAKTFVVVTMFLWVRATFPRFRYDQIMRLGWKIFIPVTLVWLVVVGAWMQTPYNIWK</sequence>
<reference key="1">
    <citation type="journal article" date="2008" name="Appl. Environ. Microbiol.">
        <title>The genome of Polaromonas sp. strain JS666: insights into the evolution of a hydrocarbon- and xenobiotic-degrading bacterium, and features of relevance to biotechnology.</title>
        <authorList>
            <person name="Mattes T.E."/>
            <person name="Alexander A.K."/>
            <person name="Richardson P.M."/>
            <person name="Munk A.C."/>
            <person name="Han C.S."/>
            <person name="Stothard P."/>
            <person name="Coleman N.V."/>
        </authorList>
    </citation>
    <scope>NUCLEOTIDE SEQUENCE [LARGE SCALE GENOMIC DNA]</scope>
    <source>
        <strain>JS666 / ATCC BAA-500</strain>
    </source>
</reference>
<accession>Q127X9</accession>
<comment type="function">
    <text evidence="1">NDH-1 shuttles electrons from NADH, via FMN and iron-sulfur (Fe-S) centers, to quinones in the respiratory chain. The immediate electron acceptor for the enzyme in this species is believed to be ubiquinone. Couples the redox reaction to proton translocation (for every two electrons transferred, four hydrogen ions are translocated across the cytoplasmic membrane), and thus conserves the redox energy in a proton gradient. This subunit may bind ubiquinone.</text>
</comment>
<comment type="catalytic activity">
    <reaction evidence="1">
        <text>a quinone + NADH + 5 H(+)(in) = a quinol + NAD(+) + 4 H(+)(out)</text>
        <dbReference type="Rhea" id="RHEA:57888"/>
        <dbReference type="ChEBI" id="CHEBI:15378"/>
        <dbReference type="ChEBI" id="CHEBI:24646"/>
        <dbReference type="ChEBI" id="CHEBI:57540"/>
        <dbReference type="ChEBI" id="CHEBI:57945"/>
        <dbReference type="ChEBI" id="CHEBI:132124"/>
    </reaction>
</comment>
<comment type="subunit">
    <text evidence="1">NDH-1 is composed of 14 different subunits. Subunits NuoA, H, J, K, L, M, N constitute the membrane sector of the complex.</text>
</comment>
<comment type="subcellular location">
    <subcellularLocation>
        <location evidence="1">Cell inner membrane</location>
        <topology evidence="1">Multi-pass membrane protein</topology>
    </subcellularLocation>
</comment>
<comment type="similarity">
    <text evidence="1">Belongs to the complex I subunit 1 family.</text>
</comment>
<evidence type="ECO:0000255" key="1">
    <source>
        <dbReference type="HAMAP-Rule" id="MF_01350"/>
    </source>
</evidence>
<feature type="chain" id="PRO_0000298837" description="NADH-quinone oxidoreductase subunit H">
    <location>
        <begin position="1"/>
        <end position="359"/>
    </location>
</feature>
<feature type="transmembrane region" description="Helical" evidence="1">
    <location>
        <begin position="16"/>
        <end position="36"/>
    </location>
</feature>
<feature type="transmembrane region" description="Helical" evidence="1">
    <location>
        <begin position="94"/>
        <end position="114"/>
    </location>
</feature>
<feature type="transmembrane region" description="Helical" evidence="1">
    <location>
        <begin position="129"/>
        <end position="149"/>
    </location>
</feature>
<feature type="transmembrane region" description="Helical" evidence="1">
    <location>
        <begin position="167"/>
        <end position="187"/>
    </location>
</feature>
<feature type="transmembrane region" description="Helical" evidence="1">
    <location>
        <begin position="208"/>
        <end position="228"/>
    </location>
</feature>
<feature type="transmembrane region" description="Helical" evidence="1">
    <location>
        <begin position="261"/>
        <end position="281"/>
    </location>
</feature>
<feature type="transmembrane region" description="Helical" evidence="1">
    <location>
        <begin position="296"/>
        <end position="316"/>
    </location>
</feature>
<feature type="transmembrane region" description="Helical" evidence="1">
    <location>
        <begin position="331"/>
        <end position="351"/>
    </location>
</feature>
<gene>
    <name evidence="1" type="primary">nuoH</name>
    <name type="ordered locus">Bpro_3249</name>
</gene>
<keyword id="KW-0997">Cell inner membrane</keyword>
<keyword id="KW-1003">Cell membrane</keyword>
<keyword id="KW-0472">Membrane</keyword>
<keyword id="KW-0520">NAD</keyword>
<keyword id="KW-0874">Quinone</keyword>
<keyword id="KW-1185">Reference proteome</keyword>
<keyword id="KW-1278">Translocase</keyword>
<keyword id="KW-0812">Transmembrane</keyword>
<keyword id="KW-1133">Transmembrane helix</keyword>
<keyword id="KW-0830">Ubiquinone</keyword>
<organism>
    <name type="scientific">Polaromonas sp. (strain JS666 / ATCC BAA-500)</name>
    <dbReference type="NCBI Taxonomy" id="296591"/>
    <lineage>
        <taxon>Bacteria</taxon>
        <taxon>Pseudomonadati</taxon>
        <taxon>Pseudomonadota</taxon>
        <taxon>Betaproteobacteria</taxon>
        <taxon>Burkholderiales</taxon>
        <taxon>Comamonadaceae</taxon>
        <taxon>Polaromonas</taxon>
    </lineage>
</organism>
<name>NUOH_POLSJ</name>
<proteinExistence type="inferred from homology"/>
<dbReference type="EC" id="7.1.1.-" evidence="1"/>
<dbReference type="EMBL" id="CP000316">
    <property type="protein sequence ID" value="ABE45163.1"/>
    <property type="molecule type" value="Genomic_DNA"/>
</dbReference>
<dbReference type="RefSeq" id="WP_011484158.1">
    <property type="nucleotide sequence ID" value="NC_007948.1"/>
</dbReference>
<dbReference type="SMR" id="Q127X9"/>
<dbReference type="STRING" id="296591.Bpro_3249"/>
<dbReference type="KEGG" id="pol:Bpro_3249"/>
<dbReference type="eggNOG" id="COG1005">
    <property type="taxonomic scope" value="Bacteria"/>
</dbReference>
<dbReference type="HOGENOM" id="CLU_015134_0_1_4"/>
<dbReference type="OrthoDB" id="9803734at2"/>
<dbReference type="Proteomes" id="UP000001983">
    <property type="component" value="Chromosome"/>
</dbReference>
<dbReference type="GO" id="GO:0005886">
    <property type="term" value="C:plasma membrane"/>
    <property type="evidence" value="ECO:0007669"/>
    <property type="project" value="UniProtKB-SubCell"/>
</dbReference>
<dbReference type="GO" id="GO:0003954">
    <property type="term" value="F:NADH dehydrogenase activity"/>
    <property type="evidence" value="ECO:0007669"/>
    <property type="project" value="TreeGrafter"/>
</dbReference>
<dbReference type="GO" id="GO:0016655">
    <property type="term" value="F:oxidoreductase activity, acting on NAD(P)H, quinone or similar compound as acceptor"/>
    <property type="evidence" value="ECO:0007669"/>
    <property type="project" value="UniProtKB-UniRule"/>
</dbReference>
<dbReference type="GO" id="GO:0048038">
    <property type="term" value="F:quinone binding"/>
    <property type="evidence" value="ECO:0007669"/>
    <property type="project" value="UniProtKB-KW"/>
</dbReference>
<dbReference type="GO" id="GO:0009060">
    <property type="term" value="P:aerobic respiration"/>
    <property type="evidence" value="ECO:0007669"/>
    <property type="project" value="TreeGrafter"/>
</dbReference>
<dbReference type="HAMAP" id="MF_01350">
    <property type="entry name" value="NDH1_NuoH"/>
    <property type="match status" value="1"/>
</dbReference>
<dbReference type="InterPro" id="IPR001694">
    <property type="entry name" value="NADH_UbQ_OxRdtase_su1/FPO"/>
</dbReference>
<dbReference type="InterPro" id="IPR018086">
    <property type="entry name" value="NADH_UbQ_OxRdtase_su1_CS"/>
</dbReference>
<dbReference type="NCBIfam" id="NF004741">
    <property type="entry name" value="PRK06076.1-2"/>
    <property type="match status" value="1"/>
</dbReference>
<dbReference type="NCBIfam" id="NF004742">
    <property type="entry name" value="PRK06076.1-3"/>
    <property type="match status" value="1"/>
</dbReference>
<dbReference type="PANTHER" id="PTHR11432">
    <property type="entry name" value="NADH DEHYDROGENASE SUBUNIT 1"/>
    <property type="match status" value="1"/>
</dbReference>
<dbReference type="PANTHER" id="PTHR11432:SF3">
    <property type="entry name" value="NADH-UBIQUINONE OXIDOREDUCTASE CHAIN 1"/>
    <property type="match status" value="1"/>
</dbReference>
<dbReference type="Pfam" id="PF00146">
    <property type="entry name" value="NADHdh"/>
    <property type="match status" value="1"/>
</dbReference>
<dbReference type="PROSITE" id="PS00667">
    <property type="entry name" value="COMPLEX1_ND1_1"/>
    <property type="match status" value="1"/>
</dbReference>
<dbReference type="PROSITE" id="PS00668">
    <property type="entry name" value="COMPLEX1_ND1_2"/>
    <property type="match status" value="1"/>
</dbReference>
<protein>
    <recommendedName>
        <fullName evidence="1">NADH-quinone oxidoreductase subunit H</fullName>
        <ecNumber evidence="1">7.1.1.-</ecNumber>
    </recommendedName>
    <alternativeName>
        <fullName evidence="1">NADH dehydrogenase I subunit H</fullName>
    </alternativeName>
    <alternativeName>
        <fullName evidence="1">NDH-1 subunit H</fullName>
    </alternativeName>
</protein>